<evidence type="ECO:0000255" key="1"/>
<evidence type="ECO:0000255" key="2">
    <source>
        <dbReference type="PROSITE-ProRule" id="PRU01110"/>
    </source>
</evidence>
<evidence type="ECO:0000303" key="3">
    <source>
    </source>
</evidence>
<evidence type="ECO:0000305" key="4"/>
<evidence type="ECO:0000305" key="5">
    <source>
    </source>
</evidence>
<evidence type="ECO:0000305" key="6">
    <source>
    </source>
</evidence>
<evidence type="ECO:0000312" key="7">
    <source>
        <dbReference type="Araport" id="AT4G03153"/>
    </source>
</evidence>
<evidence type="ECO:0000312" key="8">
    <source>
        <dbReference type="EMBL" id="AAD14443.1"/>
    </source>
</evidence>
<evidence type="ECO:0000312" key="9">
    <source>
        <dbReference type="EMBL" id="AAY78787.1"/>
    </source>
</evidence>
<name>NET3B_ARATH</name>
<protein>
    <recommendedName>
        <fullName evidence="3">Protein NETWORKED 3B</fullName>
    </recommendedName>
</protein>
<organism evidence="9">
    <name type="scientific">Arabidopsis thaliana</name>
    <name type="common">Mouse-ear cress</name>
    <dbReference type="NCBI Taxonomy" id="3702"/>
    <lineage>
        <taxon>Eukaryota</taxon>
        <taxon>Viridiplantae</taxon>
        <taxon>Streptophyta</taxon>
        <taxon>Embryophyta</taxon>
        <taxon>Tracheophyta</taxon>
        <taxon>Spermatophyta</taxon>
        <taxon>Magnoliopsida</taxon>
        <taxon>eudicotyledons</taxon>
        <taxon>Gunneridae</taxon>
        <taxon>Pentapetalae</taxon>
        <taxon>rosids</taxon>
        <taxon>malvids</taxon>
        <taxon>Brassicales</taxon>
        <taxon>Brassicaceae</taxon>
        <taxon>Camelineae</taxon>
        <taxon>Arabidopsis</taxon>
    </lineage>
</organism>
<gene>
    <name evidence="3" type="primary">NET3B</name>
    <name evidence="7" type="ordered locus">At4g03153</name>
    <name evidence="8" type="ORF">F4C21.7</name>
</gene>
<proteinExistence type="evidence at protein level"/>
<accession>Q4PSJ7</accession>
<accession>Q9ZR16</accession>
<reference key="1">
    <citation type="journal article" date="1999" name="Nature">
        <title>Sequence and analysis of chromosome 4 of the plant Arabidopsis thaliana.</title>
        <authorList>
            <person name="Mayer K.F.X."/>
            <person name="Schueller C."/>
            <person name="Wambutt R."/>
            <person name="Murphy G."/>
            <person name="Volckaert G."/>
            <person name="Pohl T."/>
            <person name="Duesterhoeft A."/>
            <person name="Stiekema W."/>
            <person name="Entian K.-D."/>
            <person name="Terryn N."/>
            <person name="Harris B."/>
            <person name="Ansorge W."/>
            <person name="Brandt P."/>
            <person name="Grivell L.A."/>
            <person name="Rieger M."/>
            <person name="Weichselgartner M."/>
            <person name="de Simone V."/>
            <person name="Obermaier B."/>
            <person name="Mache R."/>
            <person name="Mueller M."/>
            <person name="Kreis M."/>
            <person name="Delseny M."/>
            <person name="Puigdomenech P."/>
            <person name="Watson M."/>
            <person name="Schmidtheini T."/>
            <person name="Reichert B."/>
            <person name="Portetelle D."/>
            <person name="Perez-Alonso M."/>
            <person name="Boutry M."/>
            <person name="Bancroft I."/>
            <person name="Vos P."/>
            <person name="Hoheisel J."/>
            <person name="Zimmermann W."/>
            <person name="Wedler H."/>
            <person name="Ridley P."/>
            <person name="Langham S.-A."/>
            <person name="McCullagh B."/>
            <person name="Bilham L."/>
            <person name="Robben J."/>
            <person name="van der Schueren J."/>
            <person name="Grymonprez B."/>
            <person name="Chuang Y.-J."/>
            <person name="Vandenbussche F."/>
            <person name="Braeken M."/>
            <person name="Weltjens I."/>
            <person name="Voet M."/>
            <person name="Bastiaens I."/>
            <person name="Aert R."/>
            <person name="Defoor E."/>
            <person name="Weitzenegger T."/>
            <person name="Bothe G."/>
            <person name="Ramsperger U."/>
            <person name="Hilbert H."/>
            <person name="Braun M."/>
            <person name="Holzer E."/>
            <person name="Brandt A."/>
            <person name="Peters S."/>
            <person name="van Staveren M."/>
            <person name="Dirkse W."/>
            <person name="Mooijman P."/>
            <person name="Klein Lankhorst R."/>
            <person name="Rose M."/>
            <person name="Hauf J."/>
            <person name="Koetter P."/>
            <person name="Berneiser S."/>
            <person name="Hempel S."/>
            <person name="Feldpausch M."/>
            <person name="Lamberth S."/>
            <person name="Van den Daele H."/>
            <person name="De Keyser A."/>
            <person name="Buysshaert C."/>
            <person name="Gielen J."/>
            <person name="Villarroel R."/>
            <person name="De Clercq R."/>
            <person name="van Montagu M."/>
            <person name="Rogers J."/>
            <person name="Cronin A."/>
            <person name="Quail M.A."/>
            <person name="Bray-Allen S."/>
            <person name="Clark L."/>
            <person name="Doggett J."/>
            <person name="Hall S."/>
            <person name="Kay M."/>
            <person name="Lennard N."/>
            <person name="McLay K."/>
            <person name="Mayes R."/>
            <person name="Pettett A."/>
            <person name="Rajandream M.A."/>
            <person name="Lyne M."/>
            <person name="Benes V."/>
            <person name="Rechmann S."/>
            <person name="Borkova D."/>
            <person name="Bloecker H."/>
            <person name="Scharfe M."/>
            <person name="Grimm M."/>
            <person name="Loehnert T.-H."/>
            <person name="Dose S."/>
            <person name="de Haan M."/>
            <person name="Maarse A.C."/>
            <person name="Schaefer M."/>
            <person name="Mueller-Auer S."/>
            <person name="Gabel C."/>
            <person name="Fuchs M."/>
            <person name="Fartmann B."/>
            <person name="Granderath K."/>
            <person name="Dauner D."/>
            <person name="Herzl A."/>
            <person name="Neumann S."/>
            <person name="Argiriou A."/>
            <person name="Vitale D."/>
            <person name="Liguori R."/>
            <person name="Piravandi E."/>
            <person name="Massenet O."/>
            <person name="Quigley F."/>
            <person name="Clabauld G."/>
            <person name="Muendlein A."/>
            <person name="Felber R."/>
            <person name="Schnabl S."/>
            <person name="Hiller R."/>
            <person name="Schmidt W."/>
            <person name="Lecharny A."/>
            <person name="Aubourg S."/>
            <person name="Chefdor F."/>
            <person name="Cooke R."/>
            <person name="Berger C."/>
            <person name="Monfort A."/>
            <person name="Casacuberta E."/>
            <person name="Gibbons T."/>
            <person name="Weber N."/>
            <person name="Vandenbol M."/>
            <person name="Bargues M."/>
            <person name="Terol J."/>
            <person name="Torres A."/>
            <person name="Perez-Perez A."/>
            <person name="Purnelle B."/>
            <person name="Bent E."/>
            <person name="Johnson S."/>
            <person name="Tacon D."/>
            <person name="Jesse T."/>
            <person name="Heijnen L."/>
            <person name="Schwarz S."/>
            <person name="Scholler P."/>
            <person name="Heber S."/>
            <person name="Francs P."/>
            <person name="Bielke C."/>
            <person name="Frishman D."/>
            <person name="Haase D."/>
            <person name="Lemcke K."/>
            <person name="Mewes H.-W."/>
            <person name="Stocker S."/>
            <person name="Zaccaria P."/>
            <person name="Bevan M."/>
            <person name="Wilson R.K."/>
            <person name="de la Bastide M."/>
            <person name="Habermann K."/>
            <person name="Parnell L."/>
            <person name="Dedhia N."/>
            <person name="Gnoj L."/>
            <person name="Schutz K."/>
            <person name="Huang E."/>
            <person name="Spiegel L."/>
            <person name="Sekhon M."/>
            <person name="Murray J."/>
            <person name="Sheet P."/>
            <person name="Cordes M."/>
            <person name="Abu-Threideh J."/>
            <person name="Stoneking T."/>
            <person name="Kalicki J."/>
            <person name="Graves T."/>
            <person name="Harmon G."/>
            <person name="Edwards J."/>
            <person name="Latreille P."/>
            <person name="Courtney L."/>
            <person name="Cloud J."/>
            <person name="Abbott A."/>
            <person name="Scott K."/>
            <person name="Johnson D."/>
            <person name="Minx P."/>
            <person name="Bentley D."/>
            <person name="Fulton B."/>
            <person name="Miller N."/>
            <person name="Greco T."/>
            <person name="Kemp K."/>
            <person name="Kramer J."/>
            <person name="Fulton L."/>
            <person name="Mardis E."/>
            <person name="Dante M."/>
            <person name="Pepin K."/>
            <person name="Hillier L.W."/>
            <person name="Nelson J."/>
            <person name="Spieth J."/>
            <person name="Ryan E."/>
            <person name="Andrews S."/>
            <person name="Geisel C."/>
            <person name="Layman D."/>
            <person name="Du H."/>
            <person name="Ali J."/>
            <person name="Berghoff A."/>
            <person name="Jones K."/>
            <person name="Drone K."/>
            <person name="Cotton M."/>
            <person name="Joshu C."/>
            <person name="Antonoiu B."/>
            <person name="Zidanic M."/>
            <person name="Strong C."/>
            <person name="Sun H."/>
            <person name="Lamar B."/>
            <person name="Yordan C."/>
            <person name="Ma P."/>
            <person name="Zhong J."/>
            <person name="Preston R."/>
            <person name="Vil D."/>
            <person name="Shekher M."/>
            <person name="Matero A."/>
            <person name="Shah R."/>
            <person name="Swaby I.K."/>
            <person name="O'Shaughnessy A."/>
            <person name="Rodriguez M."/>
            <person name="Hoffman J."/>
            <person name="Till S."/>
            <person name="Granat S."/>
            <person name="Shohdy N."/>
            <person name="Hasegawa A."/>
            <person name="Hameed A."/>
            <person name="Lodhi M."/>
            <person name="Johnson A."/>
            <person name="Chen E."/>
            <person name="Marra M.A."/>
            <person name="Martienssen R."/>
            <person name="McCombie W.R."/>
        </authorList>
    </citation>
    <scope>NUCLEOTIDE SEQUENCE [LARGE SCALE GENOMIC DNA]</scope>
    <source>
        <strain>cv. Columbia</strain>
    </source>
</reference>
<reference key="2">
    <citation type="journal article" date="2017" name="Plant J.">
        <title>Araport11: a complete reannotation of the Arabidopsis thaliana reference genome.</title>
        <authorList>
            <person name="Cheng C.Y."/>
            <person name="Krishnakumar V."/>
            <person name="Chan A.P."/>
            <person name="Thibaud-Nissen F."/>
            <person name="Schobel S."/>
            <person name="Town C.D."/>
        </authorList>
    </citation>
    <scope>GENOME REANNOTATION</scope>
    <source>
        <strain>cv. Columbia</strain>
    </source>
</reference>
<reference key="3">
    <citation type="submission" date="2005-05" db="EMBL/GenBank/DDBJ databases">
        <authorList>
            <person name="Underwood B.A."/>
            <person name="Xiao Y.-L."/>
            <person name="Moskal W.A. Jr."/>
            <person name="Monaghan E.L."/>
            <person name="Wang W."/>
            <person name="Redman J.C."/>
            <person name="Wu H.C."/>
            <person name="Utterback T."/>
            <person name="Town C.D."/>
        </authorList>
    </citation>
    <scope>NUCLEOTIDE SEQUENCE [LARGE SCALE MRNA]</scope>
    <source>
        <strain>cv. Columbia</strain>
    </source>
</reference>
<reference key="4">
    <citation type="journal article" date="2012" name="Curr. Biol.">
        <title>A superfamily of actin-binding proteins at the actin-membrane nexus of higher plants.</title>
        <authorList>
            <person name="Deeks M.J."/>
            <person name="Calcutt J.R."/>
            <person name="Ingle E.K."/>
            <person name="Hawkins T.J."/>
            <person name="Chapman S."/>
            <person name="Richardson A.C."/>
            <person name="Mentlak D.A."/>
            <person name="Dixon M.R."/>
            <person name="Cartwright F."/>
            <person name="Smertenko A.P."/>
            <person name="Oparka K."/>
            <person name="Hussey P.J."/>
        </authorList>
    </citation>
    <scope>GENE FAMILY</scope>
    <scope>NOMENCLATURE</scope>
</reference>
<reference key="5">
    <citation type="journal article" date="2014" name="Front. Plant Sci.">
        <title>The evolution of the actin binding NET superfamily.</title>
        <authorList>
            <person name="Hawkins T.J."/>
            <person name="Deeks M.J."/>
            <person name="Wang P."/>
            <person name="Hussey P.J."/>
        </authorList>
    </citation>
    <scope>INTERACTION WITH F-ACTIN</scope>
    <scope>GENE FAMILY</scope>
</reference>
<comment type="function">
    <text evidence="5">Plant-specific actin binding protein. May be part of a membrane-cytoskeletal adapter complex.</text>
</comment>
<comment type="subunit">
    <text evidence="6">Interacts with F-actin.</text>
</comment>
<comment type="similarity">
    <text evidence="4">Belongs to the NET family.</text>
</comment>
<comment type="sequence caution" evidence="4">
    <conflict type="erroneous gene model prediction">
        <sequence resource="EMBL-CDS" id="AAD14443"/>
    </conflict>
</comment>
<comment type="sequence caution" evidence="4">
    <conflict type="erroneous gene model prediction">
        <sequence resource="EMBL-CDS" id="CAB77800"/>
    </conflict>
</comment>
<dbReference type="EMBL" id="AC005275">
    <property type="protein sequence ID" value="AAD14443.1"/>
    <property type="status" value="ALT_SEQ"/>
    <property type="molecule type" value="Genomic_DNA"/>
</dbReference>
<dbReference type="EMBL" id="AL161496">
    <property type="protein sequence ID" value="CAB77800.1"/>
    <property type="status" value="ALT_SEQ"/>
    <property type="molecule type" value="Genomic_DNA"/>
</dbReference>
<dbReference type="EMBL" id="CP002687">
    <property type="protein sequence ID" value="AEE82280.1"/>
    <property type="molecule type" value="Genomic_DNA"/>
</dbReference>
<dbReference type="EMBL" id="DQ056639">
    <property type="protein sequence ID" value="AAY78787.1"/>
    <property type="molecule type" value="mRNA"/>
</dbReference>
<dbReference type="PIR" id="A85040">
    <property type="entry name" value="A85040"/>
</dbReference>
<dbReference type="RefSeq" id="NP_567253.1">
    <property type="nucleotide sequence ID" value="NM_116550.1"/>
</dbReference>
<dbReference type="SMR" id="Q4PSJ7"/>
<dbReference type="STRING" id="3702.Q4PSJ7"/>
<dbReference type="PaxDb" id="3702-AT4G03153.1"/>
<dbReference type="EnsemblPlants" id="AT4G03153.1">
    <property type="protein sequence ID" value="AT4G03153.1"/>
    <property type="gene ID" value="AT4G03153"/>
</dbReference>
<dbReference type="GeneID" id="828056"/>
<dbReference type="Gramene" id="AT4G03153.1">
    <property type="protein sequence ID" value="AT4G03153.1"/>
    <property type="gene ID" value="AT4G03153"/>
</dbReference>
<dbReference type="KEGG" id="ath:AT4G03153"/>
<dbReference type="Araport" id="AT4G03153"/>
<dbReference type="TAIR" id="AT4G03153">
    <property type="gene designation" value="NET3B"/>
</dbReference>
<dbReference type="HOGENOM" id="CLU_1284874_0_0_1"/>
<dbReference type="InParanoid" id="Q4PSJ7"/>
<dbReference type="OMA" id="CETHDHY"/>
<dbReference type="PhylomeDB" id="Q4PSJ7"/>
<dbReference type="PRO" id="PR:Q4PSJ7"/>
<dbReference type="Proteomes" id="UP000006548">
    <property type="component" value="Chromosome 4"/>
</dbReference>
<dbReference type="ExpressionAtlas" id="Q4PSJ7">
    <property type="expression patterns" value="baseline and differential"/>
</dbReference>
<dbReference type="GO" id="GO:0016020">
    <property type="term" value="C:membrane"/>
    <property type="evidence" value="ECO:0007669"/>
    <property type="project" value="UniProtKB-ARBA"/>
</dbReference>
<dbReference type="GO" id="GO:0003779">
    <property type="term" value="F:actin binding"/>
    <property type="evidence" value="ECO:0007669"/>
    <property type="project" value="InterPro"/>
</dbReference>
<dbReference type="InterPro" id="IPR011684">
    <property type="entry name" value="NAB"/>
</dbReference>
<dbReference type="InterPro" id="IPR051861">
    <property type="entry name" value="NET_actin-binding_domain"/>
</dbReference>
<dbReference type="PANTHER" id="PTHR32258:SF28">
    <property type="entry name" value="PROTEIN NETWORKED 3A-RELATED"/>
    <property type="match status" value="1"/>
</dbReference>
<dbReference type="PANTHER" id="PTHR32258">
    <property type="entry name" value="PROTEIN NETWORKED 4A"/>
    <property type="match status" value="1"/>
</dbReference>
<dbReference type="Pfam" id="PF07765">
    <property type="entry name" value="KIP1"/>
    <property type="match status" value="1"/>
</dbReference>
<dbReference type="PROSITE" id="PS51774">
    <property type="entry name" value="NAB"/>
    <property type="match status" value="1"/>
</dbReference>
<keyword id="KW-0175">Coiled coil</keyword>
<keyword id="KW-1185">Reference proteome</keyword>
<feature type="chain" id="PRO_0000431858" description="Protein NETWORKED 3B">
    <location>
        <begin position="1"/>
        <end position="215"/>
    </location>
</feature>
<feature type="domain" description="NAB" evidence="2">
    <location>
        <begin position="5"/>
        <end position="90"/>
    </location>
</feature>
<feature type="coiled-coil region" evidence="1">
    <location>
        <begin position="134"/>
        <end position="165"/>
    </location>
</feature>
<sequence>MGETSKWWWIGANHNTSNSSPWLNSTLSELDSKTKEMLSVIDEVEDEGDSLMKRAKINYENKPKLIELLEELYRSHRSLAQKHDLLIKTSSLNSDSHNSSSCDEIRSEVCEETESSDVEAETEKDQIVEFDDGDETMKEELEILREENRVYKEKKEVVTRLLANLVRVCFCFQFNWEIFSYHLLRFCLLFSHDPIGGWVICTKRFRYYFLIMFSF</sequence>